<accession>Q9BBP2</accession>
<gene>
    <name evidence="1" type="primary">ndhE</name>
</gene>
<evidence type="ECO:0000255" key="1">
    <source>
        <dbReference type="HAMAP-Rule" id="MF_01456"/>
    </source>
</evidence>
<organism>
    <name type="scientific">Lotus japonicus</name>
    <name type="common">Lotus corniculatus var. japonicus</name>
    <dbReference type="NCBI Taxonomy" id="34305"/>
    <lineage>
        <taxon>Eukaryota</taxon>
        <taxon>Viridiplantae</taxon>
        <taxon>Streptophyta</taxon>
        <taxon>Embryophyta</taxon>
        <taxon>Tracheophyta</taxon>
        <taxon>Spermatophyta</taxon>
        <taxon>Magnoliopsida</taxon>
        <taxon>eudicotyledons</taxon>
        <taxon>Gunneridae</taxon>
        <taxon>Pentapetalae</taxon>
        <taxon>rosids</taxon>
        <taxon>fabids</taxon>
        <taxon>Fabales</taxon>
        <taxon>Fabaceae</taxon>
        <taxon>Papilionoideae</taxon>
        <taxon>50 kb inversion clade</taxon>
        <taxon>NPAAA clade</taxon>
        <taxon>Hologalegina</taxon>
        <taxon>robinioid clade</taxon>
        <taxon>Loteae</taxon>
        <taxon>Lotus</taxon>
    </lineage>
</organism>
<name>NU4LC_LOTJA</name>
<keyword id="KW-0150">Chloroplast</keyword>
<keyword id="KW-0472">Membrane</keyword>
<keyword id="KW-0520">NAD</keyword>
<keyword id="KW-0521">NADP</keyword>
<keyword id="KW-0934">Plastid</keyword>
<keyword id="KW-0618">Plastoquinone</keyword>
<keyword id="KW-0874">Quinone</keyword>
<keyword id="KW-0793">Thylakoid</keyword>
<keyword id="KW-1278">Translocase</keyword>
<keyword id="KW-0812">Transmembrane</keyword>
<keyword id="KW-1133">Transmembrane helix</keyword>
<keyword id="KW-0813">Transport</keyword>
<dbReference type="EC" id="7.1.1.-" evidence="1"/>
<dbReference type="EMBL" id="AP002983">
    <property type="protein sequence ID" value="BAB33247.1"/>
    <property type="molecule type" value="Genomic_DNA"/>
</dbReference>
<dbReference type="RefSeq" id="NP_084847.1">
    <property type="nucleotide sequence ID" value="NC_002694.1"/>
</dbReference>
<dbReference type="SMR" id="Q9BBP2"/>
<dbReference type="GeneID" id="802941"/>
<dbReference type="GO" id="GO:0009535">
    <property type="term" value="C:chloroplast thylakoid membrane"/>
    <property type="evidence" value="ECO:0007669"/>
    <property type="project" value="UniProtKB-SubCell"/>
</dbReference>
<dbReference type="GO" id="GO:0030964">
    <property type="term" value="C:NADH dehydrogenase complex"/>
    <property type="evidence" value="ECO:0007669"/>
    <property type="project" value="TreeGrafter"/>
</dbReference>
<dbReference type="GO" id="GO:0016655">
    <property type="term" value="F:oxidoreductase activity, acting on NAD(P)H, quinone or similar compound as acceptor"/>
    <property type="evidence" value="ECO:0007669"/>
    <property type="project" value="UniProtKB-UniRule"/>
</dbReference>
<dbReference type="GO" id="GO:0048038">
    <property type="term" value="F:quinone binding"/>
    <property type="evidence" value="ECO:0007669"/>
    <property type="project" value="UniProtKB-KW"/>
</dbReference>
<dbReference type="GO" id="GO:0042773">
    <property type="term" value="P:ATP synthesis coupled electron transport"/>
    <property type="evidence" value="ECO:0007669"/>
    <property type="project" value="InterPro"/>
</dbReference>
<dbReference type="GO" id="GO:0019684">
    <property type="term" value="P:photosynthesis, light reaction"/>
    <property type="evidence" value="ECO:0007669"/>
    <property type="project" value="UniProtKB-UniRule"/>
</dbReference>
<dbReference type="FunFam" id="1.10.287.3510:FF:000001">
    <property type="entry name" value="NADH-quinone oxidoreductase subunit K"/>
    <property type="match status" value="1"/>
</dbReference>
<dbReference type="Gene3D" id="1.10.287.3510">
    <property type="match status" value="1"/>
</dbReference>
<dbReference type="HAMAP" id="MF_01456">
    <property type="entry name" value="NDH1_NuoK"/>
    <property type="match status" value="1"/>
</dbReference>
<dbReference type="InterPro" id="IPR001133">
    <property type="entry name" value="NADH_UbQ_OxRdtase_chain4L/K"/>
</dbReference>
<dbReference type="InterPro" id="IPR039428">
    <property type="entry name" value="NUOK/Mnh_C1-like"/>
</dbReference>
<dbReference type="NCBIfam" id="NF004320">
    <property type="entry name" value="PRK05715.1-2"/>
    <property type="match status" value="1"/>
</dbReference>
<dbReference type="NCBIfam" id="NF004322">
    <property type="entry name" value="PRK05715.1-4"/>
    <property type="match status" value="1"/>
</dbReference>
<dbReference type="PANTHER" id="PTHR11434:SF16">
    <property type="entry name" value="NADH-UBIQUINONE OXIDOREDUCTASE CHAIN 4L"/>
    <property type="match status" value="1"/>
</dbReference>
<dbReference type="PANTHER" id="PTHR11434">
    <property type="entry name" value="NADH-UBIQUINONE OXIDOREDUCTASE SUBUNIT ND4L"/>
    <property type="match status" value="1"/>
</dbReference>
<dbReference type="Pfam" id="PF00420">
    <property type="entry name" value="Oxidored_q2"/>
    <property type="match status" value="1"/>
</dbReference>
<reference key="1">
    <citation type="journal article" date="2000" name="DNA Res.">
        <title>Complete structure of the chloroplast genome of a legume, Lotus japonicus.</title>
        <authorList>
            <person name="Kato T."/>
            <person name="Kaneko T."/>
            <person name="Sato S."/>
            <person name="Nakamura Y."/>
            <person name="Tabata S."/>
        </authorList>
    </citation>
    <scope>NUCLEOTIDE SEQUENCE [LARGE SCALE GENOMIC DNA]</scope>
    <source>
        <strain>cv. Miyakojima MG-20</strain>
    </source>
</reference>
<geneLocation type="chloroplast"/>
<comment type="function">
    <text evidence="1">NDH shuttles electrons from NAD(P)H:plastoquinone, via FMN and iron-sulfur (Fe-S) centers, to quinones in the photosynthetic chain and possibly in a chloroplast respiratory chain. The immediate electron acceptor for the enzyme in this species is believed to be plastoquinone. Couples the redox reaction to proton translocation, and thus conserves the redox energy in a proton gradient.</text>
</comment>
<comment type="catalytic activity">
    <reaction evidence="1">
        <text>a plastoquinone + NADH + (n+1) H(+)(in) = a plastoquinol + NAD(+) + n H(+)(out)</text>
        <dbReference type="Rhea" id="RHEA:42608"/>
        <dbReference type="Rhea" id="RHEA-COMP:9561"/>
        <dbReference type="Rhea" id="RHEA-COMP:9562"/>
        <dbReference type="ChEBI" id="CHEBI:15378"/>
        <dbReference type="ChEBI" id="CHEBI:17757"/>
        <dbReference type="ChEBI" id="CHEBI:57540"/>
        <dbReference type="ChEBI" id="CHEBI:57945"/>
        <dbReference type="ChEBI" id="CHEBI:62192"/>
    </reaction>
</comment>
<comment type="catalytic activity">
    <reaction evidence="1">
        <text>a plastoquinone + NADPH + (n+1) H(+)(in) = a plastoquinol + NADP(+) + n H(+)(out)</text>
        <dbReference type="Rhea" id="RHEA:42612"/>
        <dbReference type="Rhea" id="RHEA-COMP:9561"/>
        <dbReference type="Rhea" id="RHEA-COMP:9562"/>
        <dbReference type="ChEBI" id="CHEBI:15378"/>
        <dbReference type="ChEBI" id="CHEBI:17757"/>
        <dbReference type="ChEBI" id="CHEBI:57783"/>
        <dbReference type="ChEBI" id="CHEBI:58349"/>
        <dbReference type="ChEBI" id="CHEBI:62192"/>
    </reaction>
</comment>
<comment type="subunit">
    <text evidence="1">NDH is composed of at least 16 different subunits, 5 of which are encoded in the nucleus.</text>
</comment>
<comment type="subcellular location">
    <subcellularLocation>
        <location evidence="1">Plastid</location>
        <location evidence="1">Chloroplast thylakoid membrane</location>
        <topology evidence="1">Multi-pass membrane protein</topology>
    </subcellularLocation>
</comment>
<comment type="similarity">
    <text evidence="1">Belongs to the complex I subunit 4L family.</text>
</comment>
<feature type="chain" id="PRO_0000118507" description="NAD(P)H-quinone oxidoreductase subunit 4L, chloroplastic">
    <location>
        <begin position="1"/>
        <end position="101"/>
    </location>
</feature>
<feature type="transmembrane region" description="Helical" evidence="1">
    <location>
        <begin position="2"/>
        <end position="22"/>
    </location>
</feature>
<feature type="transmembrane region" description="Helical" evidence="1">
    <location>
        <begin position="32"/>
        <end position="52"/>
    </location>
</feature>
<feature type="transmembrane region" description="Helical" evidence="1">
    <location>
        <begin position="61"/>
        <end position="81"/>
    </location>
</feature>
<protein>
    <recommendedName>
        <fullName evidence="1">NAD(P)H-quinone oxidoreductase subunit 4L, chloroplastic</fullName>
        <ecNumber evidence="1">7.1.1.-</ecNumber>
    </recommendedName>
    <alternativeName>
        <fullName evidence="1">NAD(P)H dehydrogenase subunit 4L</fullName>
    </alternativeName>
    <alternativeName>
        <fullName evidence="1">NADH-plastoquinone oxidoreductase subunit 4L</fullName>
    </alternativeName>
</protein>
<proteinExistence type="inferred from homology"/>
<sequence>MMLEHVLVLSAYLFSIGIYGLITSRNMVRALMCLELILNAVNMNLVTFSDFFDNRQLKGNIFSIFVIAIAAAEAAIGPAIVSSISRNRKSIRINQSNLLNK</sequence>